<sequence length="1402" mass="155586">MNHEVMNLFNPQSPAQTFDSIRISIASPEKILSWSYGEIKKPETINYRTFKPERDGLFCARIFGPIKDYECLCGKYKRMKYKGIICEKCGVEVTLSRVRRERMGHIELAAPVAHIWFLKSLPGRISTLLDLTLKDIERVLYFENYIVTEPGLTSLKLHQLLSEEEYMLAIDEFGEDQFTAMIGAEAIYELLASMELEKIANDLRAELSETTSELKQKKLIKRLKIVENFLESGNRPEWMIMKTIPVIPPDLRPLVPLDGGRFATSDLNDLYRRVINRNNRLKRLIELRAPGIIVRNEKRMVQEAVDALFDNGRRGRVITGANKRPLKSLSDMLKGKQGRFRQNLLGKRVDYSGRSVIVTGPELKLHQCGLPKKMALELFKPFIYARLDAKGYSSTVKQAKKLVEKEHPEVWDILDEVIREHPVLLNRAPTLHRLGIQAFEPVLIEGKAIQLHPLVCTAFNADFDGDQMAVHVPLSLEAQLEARVLMMSTNNILHPANGAPIIVPSQDMVLGLYYLSIVSEKEPGEGMVFSDIGELHHALENKVVTLHTKIKGRVKNIDKDGKEVAKLYDTTPGRLIIGELLPKNPSISFDIVNQEMTKKNISKMIDQVYRHCGQKETVIFCDRIMQLGFSHACRAGISFGKDDMLIPDSKLRLVAETEALAKEYEQQYNDGLITQGEKYNKVVDAWGKCTDRVADEMMKRIQAVEFDPKTGRQRPMNSIYMMSHSGARGSANQMKQLAGMRGLMAKPSGEIIETPIISNFKEGLTVNEYFNSTHGARKGLADTALKTANSGYLTRRLVDVAQDAIISAVDCGTAKGLTMQPIVDAGQIVASLGQRILGRTALVDILHPVSGEVILEGGAMIEEADVAKIEEAGIQSVQIRSALTCETRLGVCAKCYGRDLARGTPVNQGEAVGVIAAQSIGEPGTQLTMRTFHLGGTAQVVDSSHLEASYEGTVEIRNRNVVRNSEGHLVVMGRNMAILIKDGSGKERVVHRISYGAHIFVDDGDVVKCGQRIAEWDPYTRPILTEVEGYVGFEDMIDGLSVTETADESTGITKRLVIDWRANPRGADLKPAIIIHADKKGEAIAKYKGAEARYMMSVETILSVEPGSHVKAGDVIARLPMESAKTKDITGGLPRVAELFEARRPKDHAIIAEVSGTIRFGRGYKNKRRIIIEPNDETLEPVEYLIPKGKLFHFQEGDQIEKGDYILDGNPAPHDILAIKGVEALASYLVNEIQEVYRLQGVLINDKHIEVIVRQMLQKVEITESGDSGYIPGDHVDRIELDEINDNLLAEGKRPASGNPILLGITKASLQTPSFISAASFQETTRVLTEAAVSGKIDTLQGLKENVIVGRLIPAGTGGTIAQIRRIAAVRDDLIVDEQRKSGNNEVAKAMLTNMTTVTTVE</sequence>
<feature type="chain" id="PRO_0000225513" description="DNA-directed RNA polymerase subunit beta'">
    <location>
        <begin position="1"/>
        <end position="1402"/>
    </location>
</feature>
<feature type="binding site" evidence="1">
    <location>
        <position position="71"/>
    </location>
    <ligand>
        <name>Zn(2+)</name>
        <dbReference type="ChEBI" id="CHEBI:29105"/>
        <label>1</label>
    </ligand>
</feature>
<feature type="binding site" evidence="1">
    <location>
        <position position="73"/>
    </location>
    <ligand>
        <name>Zn(2+)</name>
        <dbReference type="ChEBI" id="CHEBI:29105"/>
        <label>1</label>
    </ligand>
</feature>
<feature type="binding site" evidence="1">
    <location>
        <position position="86"/>
    </location>
    <ligand>
        <name>Zn(2+)</name>
        <dbReference type="ChEBI" id="CHEBI:29105"/>
        <label>1</label>
    </ligand>
</feature>
<feature type="binding site" evidence="1">
    <location>
        <position position="89"/>
    </location>
    <ligand>
        <name>Zn(2+)</name>
        <dbReference type="ChEBI" id="CHEBI:29105"/>
        <label>1</label>
    </ligand>
</feature>
<feature type="binding site" evidence="1">
    <location>
        <position position="462"/>
    </location>
    <ligand>
        <name>Mg(2+)</name>
        <dbReference type="ChEBI" id="CHEBI:18420"/>
    </ligand>
</feature>
<feature type="binding site" evidence="1">
    <location>
        <position position="464"/>
    </location>
    <ligand>
        <name>Mg(2+)</name>
        <dbReference type="ChEBI" id="CHEBI:18420"/>
    </ligand>
</feature>
<feature type="binding site" evidence="1">
    <location>
        <position position="466"/>
    </location>
    <ligand>
        <name>Mg(2+)</name>
        <dbReference type="ChEBI" id="CHEBI:18420"/>
    </ligand>
</feature>
<feature type="binding site" evidence="1">
    <location>
        <position position="811"/>
    </location>
    <ligand>
        <name>Zn(2+)</name>
        <dbReference type="ChEBI" id="CHEBI:29105"/>
        <label>2</label>
    </ligand>
</feature>
<feature type="binding site" evidence="1">
    <location>
        <position position="885"/>
    </location>
    <ligand>
        <name>Zn(2+)</name>
        <dbReference type="ChEBI" id="CHEBI:29105"/>
        <label>2</label>
    </ligand>
</feature>
<feature type="binding site" evidence="1">
    <location>
        <position position="892"/>
    </location>
    <ligand>
        <name>Zn(2+)</name>
        <dbReference type="ChEBI" id="CHEBI:29105"/>
        <label>2</label>
    </ligand>
</feature>
<feature type="binding site" evidence="1">
    <location>
        <position position="895"/>
    </location>
    <ligand>
        <name>Zn(2+)</name>
        <dbReference type="ChEBI" id="CHEBI:29105"/>
        <label>2</label>
    </ligand>
</feature>
<evidence type="ECO:0000255" key="1">
    <source>
        <dbReference type="HAMAP-Rule" id="MF_01322"/>
    </source>
</evidence>
<proteinExistence type="inferred from homology"/>
<comment type="function">
    <text evidence="1">DNA-dependent RNA polymerase catalyzes the transcription of DNA into RNA using the four ribonucleoside triphosphates as substrates.</text>
</comment>
<comment type="catalytic activity">
    <reaction evidence="1">
        <text>RNA(n) + a ribonucleoside 5'-triphosphate = RNA(n+1) + diphosphate</text>
        <dbReference type="Rhea" id="RHEA:21248"/>
        <dbReference type="Rhea" id="RHEA-COMP:14527"/>
        <dbReference type="Rhea" id="RHEA-COMP:17342"/>
        <dbReference type="ChEBI" id="CHEBI:33019"/>
        <dbReference type="ChEBI" id="CHEBI:61557"/>
        <dbReference type="ChEBI" id="CHEBI:140395"/>
        <dbReference type="EC" id="2.7.7.6"/>
    </reaction>
</comment>
<comment type="cofactor">
    <cofactor evidence="1">
        <name>Mg(2+)</name>
        <dbReference type="ChEBI" id="CHEBI:18420"/>
    </cofactor>
    <text evidence="1">Binds 1 Mg(2+) ion per subunit.</text>
</comment>
<comment type="cofactor">
    <cofactor evidence="1">
        <name>Zn(2+)</name>
        <dbReference type="ChEBI" id="CHEBI:29105"/>
    </cofactor>
    <text evidence="1">Binds 2 Zn(2+) ions per subunit.</text>
</comment>
<comment type="subunit">
    <text evidence="1">The RNAP catalytic core consists of 2 alpha, 1 beta, 1 beta' and 1 omega subunit. When a sigma factor is associated with the core the holoenzyme is formed, which can initiate transcription.</text>
</comment>
<comment type="similarity">
    <text evidence="1">Belongs to the RNA polymerase beta' chain family.</text>
</comment>
<accession>Q6G3X4</accession>
<dbReference type="EC" id="2.7.7.6" evidence="1"/>
<dbReference type="EMBL" id="BX897699">
    <property type="protein sequence ID" value="CAF27415.1"/>
    <property type="molecule type" value="Genomic_DNA"/>
</dbReference>
<dbReference type="RefSeq" id="WP_011180535.1">
    <property type="nucleotide sequence ID" value="NZ_LRIJ02000001.1"/>
</dbReference>
<dbReference type="SMR" id="Q6G3X4"/>
<dbReference type="PaxDb" id="283166-BH06110"/>
<dbReference type="EnsemblBacteria" id="CAF27415">
    <property type="protein sequence ID" value="CAF27415"/>
    <property type="gene ID" value="BH06110"/>
</dbReference>
<dbReference type="GeneID" id="92985663"/>
<dbReference type="KEGG" id="bhe:BH06110"/>
<dbReference type="eggNOG" id="COG0086">
    <property type="taxonomic scope" value="Bacteria"/>
</dbReference>
<dbReference type="OrthoDB" id="9815296at2"/>
<dbReference type="Proteomes" id="UP000000421">
    <property type="component" value="Chromosome"/>
</dbReference>
<dbReference type="GO" id="GO:0000428">
    <property type="term" value="C:DNA-directed RNA polymerase complex"/>
    <property type="evidence" value="ECO:0007669"/>
    <property type="project" value="UniProtKB-KW"/>
</dbReference>
<dbReference type="GO" id="GO:0003677">
    <property type="term" value="F:DNA binding"/>
    <property type="evidence" value="ECO:0007669"/>
    <property type="project" value="UniProtKB-UniRule"/>
</dbReference>
<dbReference type="GO" id="GO:0003899">
    <property type="term" value="F:DNA-directed RNA polymerase activity"/>
    <property type="evidence" value="ECO:0007669"/>
    <property type="project" value="UniProtKB-UniRule"/>
</dbReference>
<dbReference type="GO" id="GO:0000287">
    <property type="term" value="F:magnesium ion binding"/>
    <property type="evidence" value="ECO:0007669"/>
    <property type="project" value="UniProtKB-UniRule"/>
</dbReference>
<dbReference type="GO" id="GO:0008270">
    <property type="term" value="F:zinc ion binding"/>
    <property type="evidence" value="ECO:0007669"/>
    <property type="project" value="UniProtKB-UniRule"/>
</dbReference>
<dbReference type="GO" id="GO:0006351">
    <property type="term" value="P:DNA-templated transcription"/>
    <property type="evidence" value="ECO:0007669"/>
    <property type="project" value="UniProtKB-UniRule"/>
</dbReference>
<dbReference type="CDD" id="cd02655">
    <property type="entry name" value="RNAP_beta'_C"/>
    <property type="match status" value="1"/>
</dbReference>
<dbReference type="CDD" id="cd01609">
    <property type="entry name" value="RNAP_beta'_N"/>
    <property type="match status" value="1"/>
</dbReference>
<dbReference type="Gene3D" id="1.10.132.30">
    <property type="match status" value="1"/>
</dbReference>
<dbReference type="Gene3D" id="1.10.150.390">
    <property type="match status" value="1"/>
</dbReference>
<dbReference type="Gene3D" id="1.10.1790.20">
    <property type="match status" value="1"/>
</dbReference>
<dbReference type="Gene3D" id="1.10.40.90">
    <property type="match status" value="1"/>
</dbReference>
<dbReference type="Gene3D" id="2.40.40.20">
    <property type="match status" value="1"/>
</dbReference>
<dbReference type="Gene3D" id="2.40.50.100">
    <property type="match status" value="3"/>
</dbReference>
<dbReference type="Gene3D" id="4.10.860.120">
    <property type="entry name" value="RNA polymerase II, clamp domain"/>
    <property type="match status" value="1"/>
</dbReference>
<dbReference type="Gene3D" id="1.10.274.100">
    <property type="entry name" value="RNA polymerase Rpb1, domain 3"/>
    <property type="match status" value="2"/>
</dbReference>
<dbReference type="HAMAP" id="MF_01322">
    <property type="entry name" value="RNApol_bact_RpoC"/>
    <property type="match status" value="1"/>
</dbReference>
<dbReference type="InterPro" id="IPR045867">
    <property type="entry name" value="DNA-dir_RpoC_beta_prime"/>
</dbReference>
<dbReference type="InterPro" id="IPR012754">
    <property type="entry name" value="DNA-dir_RpoC_beta_prime_bact"/>
</dbReference>
<dbReference type="InterPro" id="IPR000722">
    <property type="entry name" value="RNA_pol_asu"/>
</dbReference>
<dbReference type="InterPro" id="IPR006592">
    <property type="entry name" value="RNA_pol_N"/>
</dbReference>
<dbReference type="InterPro" id="IPR007080">
    <property type="entry name" value="RNA_pol_Rpb1_1"/>
</dbReference>
<dbReference type="InterPro" id="IPR007066">
    <property type="entry name" value="RNA_pol_Rpb1_3"/>
</dbReference>
<dbReference type="InterPro" id="IPR042102">
    <property type="entry name" value="RNA_pol_Rpb1_3_sf"/>
</dbReference>
<dbReference type="InterPro" id="IPR007083">
    <property type="entry name" value="RNA_pol_Rpb1_4"/>
</dbReference>
<dbReference type="InterPro" id="IPR007081">
    <property type="entry name" value="RNA_pol_Rpb1_5"/>
</dbReference>
<dbReference type="InterPro" id="IPR044893">
    <property type="entry name" value="RNA_pol_Rpb1_clamp_domain"/>
</dbReference>
<dbReference type="InterPro" id="IPR038120">
    <property type="entry name" value="Rpb1_funnel_sf"/>
</dbReference>
<dbReference type="NCBIfam" id="TIGR02386">
    <property type="entry name" value="rpoC_TIGR"/>
    <property type="match status" value="1"/>
</dbReference>
<dbReference type="PANTHER" id="PTHR19376">
    <property type="entry name" value="DNA-DIRECTED RNA POLYMERASE"/>
    <property type="match status" value="1"/>
</dbReference>
<dbReference type="PANTHER" id="PTHR19376:SF54">
    <property type="entry name" value="DNA-DIRECTED RNA POLYMERASE SUBUNIT BETA"/>
    <property type="match status" value="1"/>
</dbReference>
<dbReference type="Pfam" id="PF04997">
    <property type="entry name" value="RNA_pol_Rpb1_1"/>
    <property type="match status" value="1"/>
</dbReference>
<dbReference type="Pfam" id="PF00623">
    <property type="entry name" value="RNA_pol_Rpb1_2"/>
    <property type="match status" value="1"/>
</dbReference>
<dbReference type="Pfam" id="PF04983">
    <property type="entry name" value="RNA_pol_Rpb1_3"/>
    <property type="match status" value="1"/>
</dbReference>
<dbReference type="Pfam" id="PF05000">
    <property type="entry name" value="RNA_pol_Rpb1_4"/>
    <property type="match status" value="1"/>
</dbReference>
<dbReference type="Pfam" id="PF04998">
    <property type="entry name" value="RNA_pol_Rpb1_5"/>
    <property type="match status" value="1"/>
</dbReference>
<dbReference type="SMART" id="SM00663">
    <property type="entry name" value="RPOLA_N"/>
    <property type="match status" value="1"/>
</dbReference>
<dbReference type="SUPFAM" id="SSF64484">
    <property type="entry name" value="beta and beta-prime subunits of DNA dependent RNA-polymerase"/>
    <property type="match status" value="1"/>
</dbReference>
<protein>
    <recommendedName>
        <fullName evidence="1">DNA-directed RNA polymerase subunit beta'</fullName>
        <shortName evidence="1">RNAP subunit beta'</shortName>
        <ecNumber evidence="1">2.7.7.6</ecNumber>
    </recommendedName>
    <alternativeName>
        <fullName evidence="1">RNA polymerase subunit beta'</fullName>
    </alternativeName>
    <alternativeName>
        <fullName evidence="1">Transcriptase subunit beta'</fullName>
    </alternativeName>
</protein>
<keyword id="KW-0240">DNA-directed RNA polymerase</keyword>
<keyword id="KW-0460">Magnesium</keyword>
<keyword id="KW-0479">Metal-binding</keyword>
<keyword id="KW-0548">Nucleotidyltransferase</keyword>
<keyword id="KW-0804">Transcription</keyword>
<keyword id="KW-0808">Transferase</keyword>
<keyword id="KW-0862">Zinc</keyword>
<organism>
    <name type="scientific">Bartonella henselae (strain ATCC 49882 / DSM 28221 / CCUG 30454 / Houston 1)</name>
    <name type="common">Rochalimaea henselae</name>
    <dbReference type="NCBI Taxonomy" id="283166"/>
    <lineage>
        <taxon>Bacteria</taxon>
        <taxon>Pseudomonadati</taxon>
        <taxon>Pseudomonadota</taxon>
        <taxon>Alphaproteobacteria</taxon>
        <taxon>Hyphomicrobiales</taxon>
        <taxon>Bartonellaceae</taxon>
        <taxon>Bartonella</taxon>
    </lineage>
</organism>
<gene>
    <name evidence="1" type="primary">rpoC</name>
    <name type="ordered locus">BH06110</name>
</gene>
<name>RPOC_BARHE</name>
<reference key="1">
    <citation type="journal article" date="2004" name="Proc. Natl. Acad. Sci. U.S.A.">
        <title>The louse-borne human pathogen Bartonella quintana is a genomic derivative of the zoonotic agent Bartonella henselae.</title>
        <authorList>
            <person name="Alsmark U.C.M."/>
            <person name="Frank A.C."/>
            <person name="Karlberg E.O."/>
            <person name="Legault B.-A."/>
            <person name="Ardell D.H."/>
            <person name="Canbaeck B."/>
            <person name="Eriksson A.-S."/>
            <person name="Naeslund A.K."/>
            <person name="Handley S.A."/>
            <person name="Huvet M."/>
            <person name="La Scola B."/>
            <person name="Holmberg M."/>
            <person name="Andersson S.G.E."/>
        </authorList>
    </citation>
    <scope>NUCLEOTIDE SEQUENCE [LARGE SCALE GENOMIC DNA]</scope>
    <source>
        <strain>ATCC 49882 / DSM 28221 / CCUG 30454 / Houston 1</strain>
    </source>
</reference>